<protein>
    <recommendedName>
        <fullName>Rhodanese-like domain-containing protein 4, chloroplastic</fullName>
    </recommendedName>
    <alternativeName>
        <fullName evidence="8">Protein THYLAKOID RHODANESE-LIKE</fullName>
    </alternativeName>
    <alternativeName>
        <fullName evidence="7">Sulfurtransferase 4</fullName>
        <shortName evidence="7">AtStr4</shortName>
    </alternativeName>
</protein>
<comment type="function">
    <text evidence="6">Rhodanese domain-containing protein required for anchoring ferredoxin--NADP reductase to the thylakoid membranes and sustaining efficient linear electron flow (LEF).</text>
</comment>
<comment type="subunit">
    <text evidence="1">Component of high molecular weight thylakoid LFNRs-containing protein complexes containing LIR1, LFNR1, LFNR2, TIC62 and TROL proteins.</text>
</comment>
<comment type="subcellular location">
    <subcellularLocation>
        <location evidence="5 6">Plastid</location>
        <location evidence="5 6">Chloroplast envelope</location>
    </subcellularLocation>
    <subcellularLocation>
        <location evidence="6">Plastid</location>
        <location evidence="6">Chloroplast thylakoid membrane</location>
        <topology evidence="2">Multi-pass membrane protein</topology>
    </subcellularLocation>
    <text evidence="6">Mainly localized to the non-appressed regions of the thylakoid membrane.</text>
</comment>
<comment type="tissue specificity">
    <text evidence="6">Expressed in leaves and stems, and at lower levels in flowers and siliques (at protein level).</text>
</comment>
<comment type="disruption phenotype">
    <text evidence="6">Slight reduction in rosette size, yellowish inflorescences and siliques and small chloroplasts with irregular morphology and no starch grains.</text>
</comment>
<comment type="sequence caution" evidence="9">
    <conflict type="erroneous gene model prediction">
        <sequence resource="EMBL-CDS" id="AAB61039"/>
    </conflict>
</comment>
<comment type="sequence caution" evidence="9">
    <conflict type="erroneous gene model prediction">
        <sequence resource="EMBL-CDS" id="CAB80914"/>
    </conflict>
</comment>
<keyword id="KW-0002">3D-structure</keyword>
<keyword id="KW-0150">Chloroplast</keyword>
<keyword id="KW-0472">Membrane</keyword>
<keyword id="KW-0934">Plastid</keyword>
<keyword id="KW-1185">Reference proteome</keyword>
<keyword id="KW-0793">Thylakoid</keyword>
<keyword id="KW-0809">Transit peptide</keyword>
<keyword id="KW-0812">Transmembrane</keyword>
<keyword id="KW-1133">Transmembrane helix</keyword>
<sequence length="466" mass="49387">MEALKTATFSPMSVLSEKRSEPRKPFSLPNLFPPKSQRPISQESFLKRFNGGLALLTSVLSSATAPAKSLTYEEALQQSMTTSSSFDSDGLIEGISNFVTDNPLVIAGGVAALAVPFVLSQVLNKKPKSWGVESAKNAYTKLGTDDNAQLLDIRATADFRQVGSPNIKGLGKKAVSTVYNGEDKPGFLKKLSLKFKDPENTTLYILDKFDGNSELVAELVALNGFKSAYAIKDGAEGPRGWLNSSLPWIEPKKTLSLDLSSLTDSISGVFGESSDGVSVALGVAAAAGLSVFAFTEIETILQLLGSAALVQLAGKKLLFAEDRKQTLKQVDEFLNTKVAPKELVDELKEIGKALLPQSTSNKALPAPATVTAEAESATATTTTVDKPVPEPETVAATTTTVDKPVPEPEPVPEPVPVPAIEAAVAAQVITEPTETEAKPKPHSRPLSPYASYPDLKPPSSPMPSQP</sequence>
<gene>
    <name evidence="7" type="primary">STR4</name>
    <name evidence="8" type="synonym">TROL</name>
    <name evidence="11" type="ordered locus">At4g01050</name>
    <name evidence="12" type="ORF">F2N1.31</name>
</gene>
<evidence type="ECO:0000250" key="1">
    <source>
        <dbReference type="UniProtKB" id="Q6ETQ7"/>
    </source>
</evidence>
<evidence type="ECO:0000255" key="2"/>
<evidence type="ECO:0000255" key="3">
    <source>
        <dbReference type="PROSITE-ProRule" id="PRU00173"/>
    </source>
</evidence>
<evidence type="ECO:0000256" key="4">
    <source>
        <dbReference type="SAM" id="MobiDB-lite"/>
    </source>
</evidence>
<evidence type="ECO:0000269" key="5">
    <source>
    </source>
</evidence>
<evidence type="ECO:0000269" key="6">
    <source>
    </source>
</evidence>
<evidence type="ECO:0000303" key="7">
    <source>
    </source>
</evidence>
<evidence type="ECO:0000303" key="8">
    <source>
    </source>
</evidence>
<evidence type="ECO:0000305" key="9"/>
<evidence type="ECO:0000305" key="10">
    <source>
    </source>
</evidence>
<evidence type="ECO:0000312" key="11">
    <source>
        <dbReference type="Araport" id="AT4G01050"/>
    </source>
</evidence>
<evidence type="ECO:0000312" key="12">
    <source>
        <dbReference type="EMBL" id="CAB80914.1"/>
    </source>
</evidence>
<evidence type="ECO:0007829" key="13">
    <source>
        <dbReference type="PDB" id="1VEE"/>
    </source>
</evidence>
<dbReference type="EMBL" id="AF007269">
    <property type="protein sequence ID" value="AAB61039.1"/>
    <property type="status" value="ALT_SEQ"/>
    <property type="molecule type" value="Genomic_DNA"/>
</dbReference>
<dbReference type="EMBL" id="AL161491">
    <property type="protein sequence ID" value="CAB80914.1"/>
    <property type="status" value="ALT_SEQ"/>
    <property type="molecule type" value="Genomic_DNA"/>
</dbReference>
<dbReference type="EMBL" id="CP002687">
    <property type="protein sequence ID" value="AEE81973.1"/>
    <property type="molecule type" value="Genomic_DNA"/>
</dbReference>
<dbReference type="EMBL" id="AY057701">
    <property type="protein sequence ID" value="AAL15331.1"/>
    <property type="molecule type" value="mRNA"/>
</dbReference>
<dbReference type="EMBL" id="AY057565">
    <property type="protein sequence ID" value="AAL09804.1"/>
    <property type="molecule type" value="mRNA"/>
</dbReference>
<dbReference type="EMBL" id="AY124870">
    <property type="protein sequence ID" value="AAM70579.1"/>
    <property type="molecule type" value="mRNA"/>
</dbReference>
<dbReference type="EMBL" id="AK226302">
    <property type="protein sequence ID" value="BAE98457.1"/>
    <property type="molecule type" value="mRNA"/>
</dbReference>
<dbReference type="PIR" id="H85013">
    <property type="entry name" value="H85013"/>
</dbReference>
<dbReference type="PIR" id="T01733">
    <property type="entry name" value="T01733"/>
</dbReference>
<dbReference type="RefSeq" id="NP_567209.1">
    <property type="nucleotide sequence ID" value="NM_116335.2"/>
</dbReference>
<dbReference type="PDB" id="1VEE">
    <property type="method" value="NMR"/>
    <property type="chains" value="A=134-254"/>
</dbReference>
<dbReference type="PDB" id="2DCQ">
    <property type="method" value="NMR"/>
    <property type="chains" value="A=134-254"/>
</dbReference>
<dbReference type="PDBsum" id="1VEE"/>
<dbReference type="PDBsum" id="2DCQ"/>
<dbReference type="BMRB" id="Q9M158"/>
<dbReference type="SMR" id="Q9M158"/>
<dbReference type="BioGRID" id="13212">
    <property type="interactions" value="1"/>
</dbReference>
<dbReference type="FunCoup" id="Q9M158">
    <property type="interactions" value="1775"/>
</dbReference>
<dbReference type="STRING" id="3702.Q9M158"/>
<dbReference type="iPTMnet" id="Q9M158"/>
<dbReference type="PaxDb" id="3702-AT4G01050.1"/>
<dbReference type="ProteomicsDB" id="228360"/>
<dbReference type="EnsemblPlants" id="AT4G01050.1">
    <property type="protein sequence ID" value="AT4G01050.1"/>
    <property type="gene ID" value="AT4G01050"/>
</dbReference>
<dbReference type="GeneID" id="827921"/>
<dbReference type="Gramene" id="AT4G01050.1">
    <property type="protein sequence ID" value="AT4G01050.1"/>
    <property type="gene ID" value="AT4G01050"/>
</dbReference>
<dbReference type="KEGG" id="ath:AT4G01050"/>
<dbReference type="Araport" id="AT4G01050"/>
<dbReference type="TAIR" id="AT4G01050">
    <property type="gene designation" value="TROL"/>
</dbReference>
<dbReference type="eggNOG" id="ENOG502QTIH">
    <property type="taxonomic scope" value="Eukaryota"/>
</dbReference>
<dbReference type="HOGENOM" id="CLU_023830_2_1_1"/>
<dbReference type="InParanoid" id="Q9M158"/>
<dbReference type="OMA" id="KPPKSWG"/>
<dbReference type="PhylomeDB" id="Q9M158"/>
<dbReference type="CD-CODE" id="4299E36E">
    <property type="entry name" value="Nucleolus"/>
</dbReference>
<dbReference type="EvolutionaryTrace" id="Q9M158"/>
<dbReference type="PRO" id="PR:Q9M158"/>
<dbReference type="Proteomes" id="UP000006548">
    <property type="component" value="Chromosome 4"/>
</dbReference>
<dbReference type="ExpressionAtlas" id="Q9M158">
    <property type="expression patterns" value="baseline and differential"/>
</dbReference>
<dbReference type="GO" id="GO:0009507">
    <property type="term" value="C:chloroplast"/>
    <property type="evidence" value="ECO:0007005"/>
    <property type="project" value="TAIR"/>
</dbReference>
<dbReference type="GO" id="GO:0009941">
    <property type="term" value="C:chloroplast envelope"/>
    <property type="evidence" value="ECO:0007005"/>
    <property type="project" value="TAIR"/>
</dbReference>
<dbReference type="GO" id="GO:0009534">
    <property type="term" value="C:chloroplast thylakoid"/>
    <property type="evidence" value="ECO:0007005"/>
    <property type="project" value="TAIR"/>
</dbReference>
<dbReference type="GO" id="GO:0009535">
    <property type="term" value="C:chloroplast thylakoid membrane"/>
    <property type="evidence" value="ECO:0000314"/>
    <property type="project" value="TAIR"/>
</dbReference>
<dbReference type="GO" id="GO:0098807">
    <property type="term" value="C:chloroplast thylakoid membrane protein complex"/>
    <property type="evidence" value="ECO:0000250"/>
    <property type="project" value="UniProtKB"/>
</dbReference>
<dbReference type="GO" id="GO:0005829">
    <property type="term" value="C:cytosol"/>
    <property type="evidence" value="ECO:0007005"/>
    <property type="project" value="TAIR"/>
</dbReference>
<dbReference type="GO" id="GO:0009772">
    <property type="term" value="P:photosynthetic electron transport in photosystem II"/>
    <property type="evidence" value="ECO:0000315"/>
    <property type="project" value="TAIR"/>
</dbReference>
<dbReference type="FunFam" id="3.40.250.10:FF:000044">
    <property type="entry name" value="Rhodanese-like domain-containing protein 4, chloroplastic"/>
    <property type="match status" value="1"/>
</dbReference>
<dbReference type="Gene3D" id="3.40.250.10">
    <property type="entry name" value="Rhodanese-like domain"/>
    <property type="match status" value="1"/>
</dbReference>
<dbReference type="InterPro" id="IPR036873">
    <property type="entry name" value="Rhodanese-like_dom_sf"/>
</dbReference>
<dbReference type="InterPro" id="IPR044240">
    <property type="entry name" value="STR4-like"/>
</dbReference>
<dbReference type="PANTHER" id="PTHR47377">
    <property type="entry name" value="RHODANESE-LIKE DOMAIN-CONTAINING PROTEIN 4, CHLOROPLASTIC"/>
    <property type="match status" value="1"/>
</dbReference>
<dbReference type="PANTHER" id="PTHR47377:SF1">
    <property type="entry name" value="RHODANESE-LIKE DOMAIN-CONTAINING PROTEIN 4, CHLOROPLASTIC"/>
    <property type="match status" value="1"/>
</dbReference>
<dbReference type="SUPFAM" id="SSF52821">
    <property type="entry name" value="Rhodanese/Cell cycle control phosphatase"/>
    <property type="match status" value="1"/>
</dbReference>
<reference key="1">
    <citation type="journal article" date="1999" name="Nature">
        <title>Sequence and analysis of chromosome 4 of the plant Arabidopsis thaliana.</title>
        <authorList>
            <person name="Mayer K.F.X."/>
            <person name="Schueller C."/>
            <person name="Wambutt R."/>
            <person name="Murphy G."/>
            <person name="Volckaert G."/>
            <person name="Pohl T."/>
            <person name="Duesterhoeft A."/>
            <person name="Stiekema W."/>
            <person name="Entian K.-D."/>
            <person name="Terryn N."/>
            <person name="Harris B."/>
            <person name="Ansorge W."/>
            <person name="Brandt P."/>
            <person name="Grivell L.A."/>
            <person name="Rieger M."/>
            <person name="Weichselgartner M."/>
            <person name="de Simone V."/>
            <person name="Obermaier B."/>
            <person name="Mache R."/>
            <person name="Mueller M."/>
            <person name="Kreis M."/>
            <person name="Delseny M."/>
            <person name="Puigdomenech P."/>
            <person name="Watson M."/>
            <person name="Schmidtheini T."/>
            <person name="Reichert B."/>
            <person name="Portetelle D."/>
            <person name="Perez-Alonso M."/>
            <person name="Boutry M."/>
            <person name="Bancroft I."/>
            <person name="Vos P."/>
            <person name="Hoheisel J."/>
            <person name="Zimmermann W."/>
            <person name="Wedler H."/>
            <person name="Ridley P."/>
            <person name="Langham S.-A."/>
            <person name="McCullagh B."/>
            <person name="Bilham L."/>
            <person name="Robben J."/>
            <person name="van der Schueren J."/>
            <person name="Grymonprez B."/>
            <person name="Chuang Y.-J."/>
            <person name="Vandenbussche F."/>
            <person name="Braeken M."/>
            <person name="Weltjens I."/>
            <person name="Voet M."/>
            <person name="Bastiaens I."/>
            <person name="Aert R."/>
            <person name="Defoor E."/>
            <person name="Weitzenegger T."/>
            <person name="Bothe G."/>
            <person name="Ramsperger U."/>
            <person name="Hilbert H."/>
            <person name="Braun M."/>
            <person name="Holzer E."/>
            <person name="Brandt A."/>
            <person name="Peters S."/>
            <person name="van Staveren M."/>
            <person name="Dirkse W."/>
            <person name="Mooijman P."/>
            <person name="Klein Lankhorst R."/>
            <person name="Rose M."/>
            <person name="Hauf J."/>
            <person name="Koetter P."/>
            <person name="Berneiser S."/>
            <person name="Hempel S."/>
            <person name="Feldpausch M."/>
            <person name="Lamberth S."/>
            <person name="Van den Daele H."/>
            <person name="De Keyser A."/>
            <person name="Buysshaert C."/>
            <person name="Gielen J."/>
            <person name="Villarroel R."/>
            <person name="De Clercq R."/>
            <person name="van Montagu M."/>
            <person name="Rogers J."/>
            <person name="Cronin A."/>
            <person name="Quail M.A."/>
            <person name="Bray-Allen S."/>
            <person name="Clark L."/>
            <person name="Doggett J."/>
            <person name="Hall S."/>
            <person name="Kay M."/>
            <person name="Lennard N."/>
            <person name="McLay K."/>
            <person name="Mayes R."/>
            <person name="Pettett A."/>
            <person name="Rajandream M.A."/>
            <person name="Lyne M."/>
            <person name="Benes V."/>
            <person name="Rechmann S."/>
            <person name="Borkova D."/>
            <person name="Bloecker H."/>
            <person name="Scharfe M."/>
            <person name="Grimm M."/>
            <person name="Loehnert T.-H."/>
            <person name="Dose S."/>
            <person name="de Haan M."/>
            <person name="Maarse A.C."/>
            <person name="Schaefer M."/>
            <person name="Mueller-Auer S."/>
            <person name="Gabel C."/>
            <person name="Fuchs M."/>
            <person name="Fartmann B."/>
            <person name="Granderath K."/>
            <person name="Dauner D."/>
            <person name="Herzl A."/>
            <person name="Neumann S."/>
            <person name="Argiriou A."/>
            <person name="Vitale D."/>
            <person name="Liguori R."/>
            <person name="Piravandi E."/>
            <person name="Massenet O."/>
            <person name="Quigley F."/>
            <person name="Clabauld G."/>
            <person name="Muendlein A."/>
            <person name="Felber R."/>
            <person name="Schnabl S."/>
            <person name="Hiller R."/>
            <person name="Schmidt W."/>
            <person name="Lecharny A."/>
            <person name="Aubourg S."/>
            <person name="Chefdor F."/>
            <person name="Cooke R."/>
            <person name="Berger C."/>
            <person name="Monfort A."/>
            <person name="Casacuberta E."/>
            <person name="Gibbons T."/>
            <person name="Weber N."/>
            <person name="Vandenbol M."/>
            <person name="Bargues M."/>
            <person name="Terol J."/>
            <person name="Torres A."/>
            <person name="Perez-Perez A."/>
            <person name="Purnelle B."/>
            <person name="Bent E."/>
            <person name="Johnson S."/>
            <person name="Tacon D."/>
            <person name="Jesse T."/>
            <person name="Heijnen L."/>
            <person name="Schwarz S."/>
            <person name="Scholler P."/>
            <person name="Heber S."/>
            <person name="Francs P."/>
            <person name="Bielke C."/>
            <person name="Frishman D."/>
            <person name="Haase D."/>
            <person name="Lemcke K."/>
            <person name="Mewes H.-W."/>
            <person name="Stocker S."/>
            <person name="Zaccaria P."/>
            <person name="Bevan M."/>
            <person name="Wilson R.K."/>
            <person name="de la Bastide M."/>
            <person name="Habermann K."/>
            <person name="Parnell L."/>
            <person name="Dedhia N."/>
            <person name="Gnoj L."/>
            <person name="Schutz K."/>
            <person name="Huang E."/>
            <person name="Spiegel L."/>
            <person name="Sekhon M."/>
            <person name="Murray J."/>
            <person name="Sheet P."/>
            <person name="Cordes M."/>
            <person name="Abu-Threideh J."/>
            <person name="Stoneking T."/>
            <person name="Kalicki J."/>
            <person name="Graves T."/>
            <person name="Harmon G."/>
            <person name="Edwards J."/>
            <person name="Latreille P."/>
            <person name="Courtney L."/>
            <person name="Cloud J."/>
            <person name="Abbott A."/>
            <person name="Scott K."/>
            <person name="Johnson D."/>
            <person name="Minx P."/>
            <person name="Bentley D."/>
            <person name="Fulton B."/>
            <person name="Miller N."/>
            <person name="Greco T."/>
            <person name="Kemp K."/>
            <person name="Kramer J."/>
            <person name="Fulton L."/>
            <person name="Mardis E."/>
            <person name="Dante M."/>
            <person name="Pepin K."/>
            <person name="Hillier L.W."/>
            <person name="Nelson J."/>
            <person name="Spieth J."/>
            <person name="Ryan E."/>
            <person name="Andrews S."/>
            <person name="Geisel C."/>
            <person name="Layman D."/>
            <person name="Du H."/>
            <person name="Ali J."/>
            <person name="Berghoff A."/>
            <person name="Jones K."/>
            <person name="Drone K."/>
            <person name="Cotton M."/>
            <person name="Joshu C."/>
            <person name="Antonoiu B."/>
            <person name="Zidanic M."/>
            <person name="Strong C."/>
            <person name="Sun H."/>
            <person name="Lamar B."/>
            <person name="Yordan C."/>
            <person name="Ma P."/>
            <person name="Zhong J."/>
            <person name="Preston R."/>
            <person name="Vil D."/>
            <person name="Shekher M."/>
            <person name="Matero A."/>
            <person name="Shah R."/>
            <person name="Swaby I.K."/>
            <person name="O'Shaughnessy A."/>
            <person name="Rodriguez M."/>
            <person name="Hoffman J."/>
            <person name="Till S."/>
            <person name="Granat S."/>
            <person name="Shohdy N."/>
            <person name="Hasegawa A."/>
            <person name="Hameed A."/>
            <person name="Lodhi M."/>
            <person name="Johnson A."/>
            <person name="Chen E."/>
            <person name="Marra M.A."/>
            <person name="Martienssen R."/>
            <person name="McCombie W.R."/>
        </authorList>
    </citation>
    <scope>NUCLEOTIDE SEQUENCE [LARGE SCALE GENOMIC DNA]</scope>
    <source>
        <strain>cv. Columbia</strain>
    </source>
</reference>
<reference key="2">
    <citation type="journal article" date="2017" name="Plant J.">
        <title>Araport11: a complete reannotation of the Arabidopsis thaliana reference genome.</title>
        <authorList>
            <person name="Cheng C.Y."/>
            <person name="Krishnakumar V."/>
            <person name="Chan A.P."/>
            <person name="Thibaud-Nissen F."/>
            <person name="Schobel S."/>
            <person name="Town C.D."/>
        </authorList>
    </citation>
    <scope>GENOME REANNOTATION</scope>
    <source>
        <strain>cv. Columbia</strain>
    </source>
</reference>
<reference key="3">
    <citation type="journal article" date="2003" name="Science">
        <title>Empirical analysis of transcriptional activity in the Arabidopsis genome.</title>
        <authorList>
            <person name="Yamada K."/>
            <person name="Lim J."/>
            <person name="Dale J.M."/>
            <person name="Chen H."/>
            <person name="Shinn P."/>
            <person name="Palm C.J."/>
            <person name="Southwick A.M."/>
            <person name="Wu H.C."/>
            <person name="Kim C.J."/>
            <person name="Nguyen M."/>
            <person name="Pham P.K."/>
            <person name="Cheuk R.F."/>
            <person name="Karlin-Newmann G."/>
            <person name="Liu S.X."/>
            <person name="Lam B."/>
            <person name="Sakano H."/>
            <person name="Wu T."/>
            <person name="Yu G."/>
            <person name="Miranda M."/>
            <person name="Quach H.L."/>
            <person name="Tripp M."/>
            <person name="Chang C.H."/>
            <person name="Lee J.M."/>
            <person name="Toriumi M.J."/>
            <person name="Chan M.M."/>
            <person name="Tang C.C."/>
            <person name="Onodera C.S."/>
            <person name="Deng J.M."/>
            <person name="Akiyama K."/>
            <person name="Ansari Y."/>
            <person name="Arakawa T."/>
            <person name="Banh J."/>
            <person name="Banno F."/>
            <person name="Bowser L."/>
            <person name="Brooks S.Y."/>
            <person name="Carninci P."/>
            <person name="Chao Q."/>
            <person name="Choy N."/>
            <person name="Enju A."/>
            <person name="Goldsmith A.D."/>
            <person name="Gurjal M."/>
            <person name="Hansen N.F."/>
            <person name="Hayashizaki Y."/>
            <person name="Johnson-Hopson C."/>
            <person name="Hsuan V.W."/>
            <person name="Iida K."/>
            <person name="Karnes M."/>
            <person name="Khan S."/>
            <person name="Koesema E."/>
            <person name="Ishida J."/>
            <person name="Jiang P.X."/>
            <person name="Jones T."/>
            <person name="Kawai J."/>
            <person name="Kamiya A."/>
            <person name="Meyers C."/>
            <person name="Nakajima M."/>
            <person name="Narusaka M."/>
            <person name="Seki M."/>
            <person name="Sakurai T."/>
            <person name="Satou M."/>
            <person name="Tamse R."/>
            <person name="Vaysberg M."/>
            <person name="Wallender E.K."/>
            <person name="Wong C."/>
            <person name="Yamamura Y."/>
            <person name="Yuan S."/>
            <person name="Shinozaki K."/>
            <person name="Davis R.W."/>
            <person name="Theologis A."/>
            <person name="Ecker J.R."/>
        </authorList>
    </citation>
    <scope>NUCLEOTIDE SEQUENCE [LARGE SCALE MRNA]</scope>
    <source>
        <strain>cv. Columbia</strain>
    </source>
</reference>
<reference key="4">
    <citation type="submission" date="2006-07" db="EMBL/GenBank/DDBJ databases">
        <title>Large-scale analysis of RIKEN Arabidopsis full-length (RAFL) cDNAs.</title>
        <authorList>
            <person name="Totoki Y."/>
            <person name="Seki M."/>
            <person name="Ishida J."/>
            <person name="Nakajima M."/>
            <person name="Enju A."/>
            <person name="Kamiya A."/>
            <person name="Narusaka M."/>
            <person name="Shin-i T."/>
            <person name="Nakagawa M."/>
            <person name="Sakamoto N."/>
            <person name="Oishi K."/>
            <person name="Kohara Y."/>
            <person name="Kobayashi M."/>
            <person name="Toyoda A."/>
            <person name="Sakaki Y."/>
            <person name="Sakurai T."/>
            <person name="Iida K."/>
            <person name="Akiyama K."/>
            <person name="Satou M."/>
            <person name="Toyoda T."/>
            <person name="Konagaya A."/>
            <person name="Carninci P."/>
            <person name="Kawai J."/>
            <person name="Hayashizaki Y."/>
            <person name="Shinozaki K."/>
        </authorList>
    </citation>
    <scope>NUCLEOTIDE SEQUENCE [LARGE SCALE MRNA]</scope>
    <source>
        <strain>cv. Columbia</strain>
    </source>
</reference>
<reference key="5">
    <citation type="journal article" date="2007" name="Plant Physiol. Biochem.">
        <title>Differential expression of Arabidopsis sulfurtransferases under various growth conditions.</title>
        <authorList>
            <person name="Bartels A."/>
            <person name="Mock H.P."/>
            <person name="Papenbrock J."/>
        </authorList>
    </citation>
    <scope>GENE FAMILY</scope>
</reference>
<reference key="6">
    <citation type="journal article" date="2008" name="PLoS ONE">
        <title>Sorting signals, N-terminal modifications and abundance of the chloroplast proteome.</title>
        <authorList>
            <person name="Zybailov B."/>
            <person name="Rutschow H."/>
            <person name="Friso G."/>
            <person name="Rudella A."/>
            <person name="Emanuelsson O."/>
            <person name="Sun Q."/>
            <person name="van Wijk K.J."/>
        </authorList>
    </citation>
    <scope>IDENTIFICATION BY MASS SPECTROMETRY</scope>
    <scope>SUBCELLULAR LOCATION [LARGE SCALE ANALYSIS]</scope>
</reference>
<reference key="7">
    <citation type="journal article" date="2009" name="Plant J.">
        <title>Tethering of ferredoxin:NADP+ oxidoreductase to thylakoid membranes is mediated by novel chloroplast protein TROL.</title>
        <authorList>
            <person name="Juric S."/>
            <person name="Hazler-Pilepic K."/>
            <person name="Tomasic A."/>
            <person name="Lepedus H."/>
            <person name="Jelicic B."/>
            <person name="Puthiyaveetil S."/>
            <person name="Bionda T."/>
            <person name="Vojta L."/>
            <person name="Allen J.F."/>
            <person name="Schleiff E."/>
            <person name="Fulgosi H."/>
        </authorList>
    </citation>
    <scope>FUNCTION</scope>
    <scope>SUBCELLULAR LOCATION</scope>
    <scope>TISSUE SPECIFICITY</scope>
    <scope>DISRUPTION PHENOTYPE</scope>
</reference>
<reference key="8">
    <citation type="journal article" date="2004" name="J. Biomol. NMR">
        <title>NMR assignment of the hypothetical rhodanese domain At4g01050 from Arabidopsis thaliana.</title>
        <authorList>
            <person name="Pantoja-Uceda D."/>
            <person name="Lopez-Mendez B."/>
            <person name="Koshiba S."/>
            <person name="Kigawa T."/>
            <person name="Shirouzu M."/>
            <person name="Terada T."/>
            <person name="Inoue M."/>
            <person name="Yabuki T."/>
            <person name="Aoki M."/>
            <person name="Seki E."/>
            <person name="Matsuda T."/>
            <person name="Hirota H."/>
            <person name="Yoshida M."/>
            <person name="Tanaka A."/>
            <person name="Osanai T."/>
            <person name="Seki M."/>
            <person name="Shinozaki K."/>
            <person name="Yokoyama S."/>
            <person name="Guentert P."/>
        </authorList>
    </citation>
    <scope>STRUCTURE BY NMR OF 134-254</scope>
</reference>
<reference key="9">
    <citation type="journal article" date="2005" name="Protein Sci.">
        <title>Solution structure of the rhodanese homology domain At4g01050(175-295) from Arabidopsis thaliana.</title>
        <authorList>
            <person name="Pantoja-Uceda D."/>
            <person name="Lopez-Mendez B."/>
            <person name="Koshiba S."/>
            <person name="Inoue M."/>
            <person name="Kigawa T."/>
            <person name="Terada T."/>
            <person name="Shirouzu M."/>
            <person name="Tanaka A."/>
            <person name="Seki M."/>
            <person name="Shinozaki K."/>
            <person name="Yokoyama S."/>
            <person name="Guentert P."/>
        </authorList>
    </citation>
    <scope>STRUCTURE BY NMR OF 134-254</scope>
</reference>
<proteinExistence type="evidence at protein level"/>
<accession>Q9M158</accession>
<accession>O04623</accession>
<accession>Q0WWP1</accession>
<accession>Q93VZ2</accession>
<feature type="transit peptide" description="Chloroplast" evidence="2">
    <location>
        <begin position="1"/>
        <end position="15"/>
    </location>
</feature>
<feature type="transit peptide" description="Thylakoid" evidence="10">
    <location>
        <begin position="16"/>
        <end position="69"/>
    </location>
</feature>
<feature type="chain" id="PRO_0000139432" description="Rhodanese-like domain-containing protein 4, chloroplastic">
    <location>
        <begin position="70"/>
        <end position="466"/>
    </location>
</feature>
<feature type="transmembrane region" description="Helical" evidence="2">
    <location>
        <begin position="103"/>
        <end position="123"/>
    </location>
</feature>
<feature type="transmembrane region" description="Helical" evidence="2">
    <location>
        <begin position="277"/>
        <end position="297"/>
    </location>
</feature>
<feature type="domain" description="Rhodanese" evidence="3">
    <location>
        <begin position="144"/>
        <end position="250"/>
    </location>
</feature>
<feature type="region of interest" description="Disordered" evidence="4">
    <location>
        <begin position="1"/>
        <end position="35"/>
    </location>
</feature>
<feature type="region of interest" description="Disordered" evidence="4">
    <location>
        <begin position="373"/>
        <end position="392"/>
    </location>
</feature>
<feature type="region of interest" description="Disordered" evidence="4">
    <location>
        <begin position="426"/>
        <end position="466"/>
    </location>
</feature>
<feature type="compositionally biased region" description="Low complexity" evidence="4">
    <location>
        <begin position="373"/>
        <end position="384"/>
    </location>
</feature>
<feature type="compositionally biased region" description="Pro residues" evidence="4">
    <location>
        <begin position="455"/>
        <end position="466"/>
    </location>
</feature>
<feature type="helix" evidence="13">
    <location>
        <begin position="135"/>
        <end position="144"/>
    </location>
</feature>
<feature type="strand" evidence="13">
    <location>
        <begin position="148"/>
        <end position="152"/>
    </location>
</feature>
<feature type="helix" evidence="13">
    <location>
        <begin position="156"/>
        <end position="161"/>
    </location>
</feature>
<feature type="turn" evidence="13">
    <location>
        <begin position="168"/>
        <end position="170"/>
    </location>
</feature>
<feature type="helix" evidence="13">
    <location>
        <begin position="181"/>
        <end position="183"/>
    </location>
</feature>
<feature type="helix" evidence="13">
    <location>
        <begin position="184"/>
        <end position="192"/>
    </location>
</feature>
<feature type="helix" evidence="13">
    <location>
        <begin position="198"/>
        <end position="200"/>
    </location>
</feature>
<feature type="strand" evidence="13">
    <location>
        <begin position="202"/>
        <end position="206"/>
    </location>
</feature>
<feature type="strand" evidence="13">
    <location>
        <begin position="208"/>
        <end position="210"/>
    </location>
</feature>
<feature type="helix" evidence="13">
    <location>
        <begin position="213"/>
        <end position="223"/>
    </location>
</feature>
<feature type="strand" evidence="13">
    <location>
        <begin position="226"/>
        <end position="230"/>
    </location>
</feature>
<feature type="turn" evidence="13">
    <location>
        <begin position="232"/>
        <end position="236"/>
    </location>
</feature>
<feature type="helix" evidence="13">
    <location>
        <begin position="242"/>
        <end position="244"/>
    </location>
</feature>
<organism>
    <name type="scientific">Arabidopsis thaliana</name>
    <name type="common">Mouse-ear cress</name>
    <dbReference type="NCBI Taxonomy" id="3702"/>
    <lineage>
        <taxon>Eukaryota</taxon>
        <taxon>Viridiplantae</taxon>
        <taxon>Streptophyta</taxon>
        <taxon>Embryophyta</taxon>
        <taxon>Tracheophyta</taxon>
        <taxon>Spermatophyta</taxon>
        <taxon>Magnoliopsida</taxon>
        <taxon>eudicotyledons</taxon>
        <taxon>Gunneridae</taxon>
        <taxon>Pentapetalae</taxon>
        <taxon>rosids</taxon>
        <taxon>malvids</taxon>
        <taxon>Brassicales</taxon>
        <taxon>Brassicaceae</taxon>
        <taxon>Camelineae</taxon>
        <taxon>Arabidopsis</taxon>
    </lineage>
</organism>
<name>STR4_ARATH</name>